<sequence>MASPAKQKVVIVGAGPVGCLAALYAAARGDDVELYELRGDLRVPGTIPLNFTKSINLSLSHRGITALRHSGREHVINEILQEVVPIYGRMIHGRDDGKLWEAPQAYDVHGRNNYSADRGMLNNVFLNELERIPNIKLFFNHKLTGADFQANKAWFERRLPGEAPLPGSSGRVPEIEVDFDFLIGADGAHSATRYHMMKFARVDYQQEYIDTLWCEFRIPPSPTNDFLISPSHLHIWPGKEFMFIALPSVDKSFTCTLFAPASHYAQLERSTEDLLQFFDEHFPGVCPQLISPSDLTAQFRANPHLPLISIKCAPHHYSSSVVIVGDAAHAVLPFYGQGLNAGLEDIQVLFDALDKHGVYNANSDQAARALARQSAFAAYTASRTADAHAINDLSRQNYVEMRWGVKQPLYRLRKYIEEALYHYLPSLGWQTQYTRVSFSNQRYSEIIAINRRQGRILGAVFGSTLISVLAVTGIYLWRQPTTRLLSLASFRGALQGALQGALTGTA</sequence>
<feature type="chain" id="PRO_0000361928" description="Kynurenine 3-monooxygenase">
    <location>
        <begin position="1"/>
        <end position="506"/>
    </location>
</feature>
<dbReference type="EC" id="1.14.13.9" evidence="1"/>
<dbReference type="EMBL" id="AACD01000089">
    <property type="protein sequence ID" value="EAA62381.1"/>
    <property type="status" value="ALT_SEQ"/>
    <property type="molecule type" value="Genomic_DNA"/>
</dbReference>
<dbReference type="EMBL" id="BN001305">
    <property type="protein sequence ID" value="CBF81067.1"/>
    <property type="molecule type" value="Genomic_DNA"/>
</dbReference>
<dbReference type="RefSeq" id="XP_662804.1">
    <property type="nucleotide sequence ID" value="XM_657712.1"/>
</dbReference>
<dbReference type="SMR" id="Q5B2N0"/>
<dbReference type="FunCoup" id="Q5B2N0">
    <property type="interactions" value="737"/>
</dbReference>
<dbReference type="STRING" id="227321.Q5B2N0"/>
<dbReference type="EnsemblFungi" id="CBF81067">
    <property type="protein sequence ID" value="CBF81067"/>
    <property type="gene ID" value="ANIA_05200"/>
</dbReference>
<dbReference type="VEuPathDB" id="FungiDB:AN5200"/>
<dbReference type="eggNOG" id="KOG2614">
    <property type="taxonomic scope" value="Eukaryota"/>
</dbReference>
<dbReference type="HOGENOM" id="CLU_023210_2_1_1"/>
<dbReference type="InParanoid" id="Q5B2N0"/>
<dbReference type="OMA" id="REFMFIA"/>
<dbReference type="OrthoDB" id="10053569at2759"/>
<dbReference type="UniPathway" id="UPA00253">
    <property type="reaction ID" value="UER00328"/>
</dbReference>
<dbReference type="Proteomes" id="UP000000560">
    <property type="component" value="Chromosome V"/>
</dbReference>
<dbReference type="GO" id="GO:0005741">
    <property type="term" value="C:mitochondrial outer membrane"/>
    <property type="evidence" value="ECO:0000318"/>
    <property type="project" value="GO_Central"/>
</dbReference>
<dbReference type="GO" id="GO:0071949">
    <property type="term" value="F:FAD binding"/>
    <property type="evidence" value="ECO:0007669"/>
    <property type="project" value="InterPro"/>
</dbReference>
<dbReference type="GO" id="GO:0004502">
    <property type="term" value="F:kynurenine 3-monooxygenase activity"/>
    <property type="evidence" value="ECO:0000318"/>
    <property type="project" value="GO_Central"/>
</dbReference>
<dbReference type="GO" id="GO:0034354">
    <property type="term" value="P:'de novo' NAD biosynthetic process from L-tryptophan"/>
    <property type="evidence" value="ECO:0007669"/>
    <property type="project" value="UniProtKB-UniRule"/>
</dbReference>
<dbReference type="GO" id="GO:0043420">
    <property type="term" value="P:anthranilate metabolic process"/>
    <property type="evidence" value="ECO:0007669"/>
    <property type="project" value="UniProtKB-UniRule"/>
</dbReference>
<dbReference type="GO" id="GO:0070189">
    <property type="term" value="P:kynurenine metabolic process"/>
    <property type="evidence" value="ECO:0000318"/>
    <property type="project" value="GO_Central"/>
</dbReference>
<dbReference type="GO" id="GO:0006569">
    <property type="term" value="P:L-tryptophan catabolic process"/>
    <property type="evidence" value="ECO:0007669"/>
    <property type="project" value="UniProtKB-UniRule"/>
</dbReference>
<dbReference type="GO" id="GO:0019805">
    <property type="term" value="P:quinolinate biosynthetic process"/>
    <property type="evidence" value="ECO:0007669"/>
    <property type="project" value="UniProtKB-UniRule"/>
</dbReference>
<dbReference type="FunFam" id="3.50.50.60:FF:000129">
    <property type="entry name" value="Kynurenine 3-monooxygenase"/>
    <property type="match status" value="1"/>
</dbReference>
<dbReference type="Gene3D" id="3.50.50.60">
    <property type="entry name" value="FAD/NAD(P)-binding domain"/>
    <property type="match status" value="1"/>
</dbReference>
<dbReference type="HAMAP" id="MF_01971">
    <property type="entry name" value="Kynurenine_monooxygenase"/>
    <property type="match status" value="1"/>
</dbReference>
<dbReference type="InterPro" id="IPR002938">
    <property type="entry name" value="FAD-bd"/>
</dbReference>
<dbReference type="InterPro" id="IPR036188">
    <property type="entry name" value="FAD/NAD-bd_sf"/>
</dbReference>
<dbReference type="InterPro" id="IPR027545">
    <property type="entry name" value="Kynurenine_monooxygenase"/>
</dbReference>
<dbReference type="PANTHER" id="PTHR46028">
    <property type="entry name" value="KYNURENINE 3-MONOOXYGENASE"/>
    <property type="match status" value="1"/>
</dbReference>
<dbReference type="PANTHER" id="PTHR46028:SF2">
    <property type="entry name" value="KYNURENINE 3-MONOOXYGENASE"/>
    <property type="match status" value="1"/>
</dbReference>
<dbReference type="Pfam" id="PF01494">
    <property type="entry name" value="FAD_binding_3"/>
    <property type="match status" value="1"/>
</dbReference>
<dbReference type="PRINTS" id="PR00420">
    <property type="entry name" value="RNGMNOXGNASE"/>
</dbReference>
<dbReference type="SUPFAM" id="SSF51905">
    <property type="entry name" value="FAD/NAD(P)-binding domain"/>
    <property type="match status" value="1"/>
</dbReference>
<comment type="function">
    <text evidence="1">Catalyzes the hydroxylation of L-kynurenine (L-Kyn) to form 3-hydroxy-L-kynurenine (L-3OHKyn). Required for synthesis of quinolinic acid.</text>
</comment>
<comment type="catalytic activity">
    <reaction evidence="1">
        <text>L-kynurenine + NADPH + O2 + H(+) = 3-hydroxy-L-kynurenine + NADP(+) + H2O</text>
        <dbReference type="Rhea" id="RHEA:20545"/>
        <dbReference type="ChEBI" id="CHEBI:15377"/>
        <dbReference type="ChEBI" id="CHEBI:15378"/>
        <dbReference type="ChEBI" id="CHEBI:15379"/>
        <dbReference type="ChEBI" id="CHEBI:57783"/>
        <dbReference type="ChEBI" id="CHEBI:57959"/>
        <dbReference type="ChEBI" id="CHEBI:58125"/>
        <dbReference type="ChEBI" id="CHEBI:58349"/>
        <dbReference type="EC" id="1.14.13.9"/>
    </reaction>
</comment>
<comment type="cofactor">
    <cofactor evidence="1">
        <name>FAD</name>
        <dbReference type="ChEBI" id="CHEBI:57692"/>
    </cofactor>
</comment>
<comment type="pathway">
    <text evidence="1">Cofactor biosynthesis; NAD(+) biosynthesis; quinolinate from L-kynurenine: step 1/3.</text>
</comment>
<comment type="subcellular location">
    <subcellularLocation>
        <location evidence="1">Mitochondrion outer membrane</location>
    </subcellularLocation>
</comment>
<comment type="similarity">
    <text evidence="1">Belongs to the aromatic-ring hydroxylase family. KMO subfamily.</text>
</comment>
<comment type="sequence caution" evidence="2">
    <conflict type="erroneous gene model prediction">
        <sequence resource="EMBL-CDS" id="EAA62381"/>
    </conflict>
</comment>
<organism>
    <name type="scientific">Emericella nidulans (strain FGSC A4 / ATCC 38163 / CBS 112.46 / NRRL 194 / M139)</name>
    <name type="common">Aspergillus nidulans</name>
    <dbReference type="NCBI Taxonomy" id="227321"/>
    <lineage>
        <taxon>Eukaryota</taxon>
        <taxon>Fungi</taxon>
        <taxon>Dikarya</taxon>
        <taxon>Ascomycota</taxon>
        <taxon>Pezizomycotina</taxon>
        <taxon>Eurotiomycetes</taxon>
        <taxon>Eurotiomycetidae</taxon>
        <taxon>Eurotiales</taxon>
        <taxon>Aspergillaceae</taxon>
        <taxon>Aspergillus</taxon>
        <taxon>Aspergillus subgen. Nidulantes</taxon>
    </lineage>
</organism>
<gene>
    <name type="primary">bna4</name>
    <name type="ORF">AN5200</name>
</gene>
<proteinExistence type="inferred from homology"/>
<name>KMO_EMENI</name>
<accession>Q5B2N0</accession>
<accession>C8VF74</accession>
<protein>
    <recommendedName>
        <fullName evidence="1">Kynurenine 3-monooxygenase</fullName>
        <ecNumber evidence="1">1.14.13.9</ecNumber>
    </recommendedName>
    <alternativeName>
        <fullName evidence="1">Biosynthesis of nicotinic acid protein 4</fullName>
    </alternativeName>
    <alternativeName>
        <fullName evidence="1">Kynurenine 3-hydroxylase</fullName>
    </alternativeName>
</protein>
<evidence type="ECO:0000255" key="1">
    <source>
        <dbReference type="HAMAP-Rule" id="MF_03018"/>
    </source>
</evidence>
<evidence type="ECO:0000305" key="2"/>
<keyword id="KW-0274">FAD</keyword>
<keyword id="KW-0285">Flavoprotein</keyword>
<keyword id="KW-0472">Membrane</keyword>
<keyword id="KW-0496">Mitochondrion</keyword>
<keyword id="KW-1000">Mitochondrion outer membrane</keyword>
<keyword id="KW-0503">Monooxygenase</keyword>
<keyword id="KW-0521">NADP</keyword>
<keyword id="KW-0560">Oxidoreductase</keyword>
<keyword id="KW-0662">Pyridine nucleotide biosynthesis</keyword>
<keyword id="KW-1185">Reference proteome</keyword>
<reference key="1">
    <citation type="journal article" date="2005" name="Nature">
        <title>Sequencing of Aspergillus nidulans and comparative analysis with A. fumigatus and A. oryzae.</title>
        <authorList>
            <person name="Galagan J.E."/>
            <person name="Calvo S.E."/>
            <person name="Cuomo C."/>
            <person name="Ma L.-J."/>
            <person name="Wortman J.R."/>
            <person name="Batzoglou S."/>
            <person name="Lee S.-I."/>
            <person name="Bastuerkmen M."/>
            <person name="Spevak C.C."/>
            <person name="Clutterbuck J."/>
            <person name="Kapitonov V."/>
            <person name="Jurka J."/>
            <person name="Scazzocchio C."/>
            <person name="Farman M.L."/>
            <person name="Butler J."/>
            <person name="Purcell S."/>
            <person name="Harris S."/>
            <person name="Braus G.H."/>
            <person name="Draht O."/>
            <person name="Busch S."/>
            <person name="D'Enfert C."/>
            <person name="Bouchier C."/>
            <person name="Goldman G.H."/>
            <person name="Bell-Pedersen D."/>
            <person name="Griffiths-Jones S."/>
            <person name="Doonan J.H."/>
            <person name="Yu J."/>
            <person name="Vienken K."/>
            <person name="Pain A."/>
            <person name="Freitag M."/>
            <person name="Selker E.U."/>
            <person name="Archer D.B."/>
            <person name="Penalva M.A."/>
            <person name="Oakley B.R."/>
            <person name="Momany M."/>
            <person name="Tanaka T."/>
            <person name="Kumagai T."/>
            <person name="Asai K."/>
            <person name="Machida M."/>
            <person name="Nierman W.C."/>
            <person name="Denning D.W."/>
            <person name="Caddick M.X."/>
            <person name="Hynes M."/>
            <person name="Paoletti M."/>
            <person name="Fischer R."/>
            <person name="Miller B.L."/>
            <person name="Dyer P.S."/>
            <person name="Sachs M.S."/>
            <person name="Osmani S.A."/>
            <person name="Birren B.W."/>
        </authorList>
    </citation>
    <scope>NUCLEOTIDE SEQUENCE [LARGE SCALE GENOMIC DNA]</scope>
    <source>
        <strain>FGSC A4 / ATCC 38163 / CBS 112.46 / NRRL 194 / M139</strain>
    </source>
</reference>
<reference key="2">
    <citation type="journal article" date="2009" name="Fungal Genet. Biol.">
        <title>The 2008 update of the Aspergillus nidulans genome annotation: a community effort.</title>
        <authorList>
            <person name="Wortman J.R."/>
            <person name="Gilsenan J.M."/>
            <person name="Joardar V."/>
            <person name="Deegan J."/>
            <person name="Clutterbuck J."/>
            <person name="Andersen M.R."/>
            <person name="Archer D."/>
            <person name="Bencina M."/>
            <person name="Braus G."/>
            <person name="Coutinho P."/>
            <person name="von Dohren H."/>
            <person name="Doonan J."/>
            <person name="Driessen A.J."/>
            <person name="Durek P."/>
            <person name="Espeso E."/>
            <person name="Fekete E."/>
            <person name="Flipphi M."/>
            <person name="Estrada C.G."/>
            <person name="Geysens S."/>
            <person name="Goldman G."/>
            <person name="de Groot P.W."/>
            <person name="Hansen K."/>
            <person name="Harris S.D."/>
            <person name="Heinekamp T."/>
            <person name="Helmstaedt K."/>
            <person name="Henrissat B."/>
            <person name="Hofmann G."/>
            <person name="Homan T."/>
            <person name="Horio T."/>
            <person name="Horiuchi H."/>
            <person name="James S."/>
            <person name="Jones M."/>
            <person name="Karaffa L."/>
            <person name="Karanyi Z."/>
            <person name="Kato M."/>
            <person name="Keller N."/>
            <person name="Kelly D.E."/>
            <person name="Kiel J.A."/>
            <person name="Kim J.M."/>
            <person name="van der Klei I.J."/>
            <person name="Klis F.M."/>
            <person name="Kovalchuk A."/>
            <person name="Krasevec N."/>
            <person name="Kubicek C.P."/>
            <person name="Liu B."/>
            <person name="Maccabe A."/>
            <person name="Meyer V."/>
            <person name="Mirabito P."/>
            <person name="Miskei M."/>
            <person name="Mos M."/>
            <person name="Mullins J."/>
            <person name="Nelson D.R."/>
            <person name="Nielsen J."/>
            <person name="Oakley B.R."/>
            <person name="Osmani S.A."/>
            <person name="Pakula T."/>
            <person name="Paszewski A."/>
            <person name="Paulsen I."/>
            <person name="Pilsyk S."/>
            <person name="Pocsi I."/>
            <person name="Punt P.J."/>
            <person name="Ram A.F."/>
            <person name="Ren Q."/>
            <person name="Robellet X."/>
            <person name="Robson G."/>
            <person name="Seiboth B."/>
            <person name="van Solingen P."/>
            <person name="Specht T."/>
            <person name="Sun J."/>
            <person name="Taheri-Talesh N."/>
            <person name="Takeshita N."/>
            <person name="Ussery D."/>
            <person name="vanKuyk P.A."/>
            <person name="Visser H."/>
            <person name="van de Vondervoort P.J."/>
            <person name="de Vries R.P."/>
            <person name="Walton J."/>
            <person name="Xiang X."/>
            <person name="Xiong Y."/>
            <person name="Zeng A.P."/>
            <person name="Brandt B.W."/>
            <person name="Cornell M.J."/>
            <person name="van den Hondel C.A."/>
            <person name="Visser J."/>
            <person name="Oliver S.G."/>
            <person name="Turner G."/>
        </authorList>
    </citation>
    <scope>GENOME REANNOTATION</scope>
    <source>
        <strain>FGSC A4 / ATCC 38163 / CBS 112.46 / NRRL 194 / M139</strain>
    </source>
</reference>